<organism>
    <name type="scientific">Ehrlichia ruminantium (strain Welgevonden)</name>
    <dbReference type="NCBI Taxonomy" id="254945"/>
    <lineage>
        <taxon>Bacteria</taxon>
        <taxon>Pseudomonadati</taxon>
        <taxon>Pseudomonadota</taxon>
        <taxon>Alphaproteobacteria</taxon>
        <taxon>Rickettsiales</taxon>
        <taxon>Anaplasmataceae</taxon>
        <taxon>Ehrlichia</taxon>
    </lineage>
</organism>
<keyword id="KW-0687">Ribonucleoprotein</keyword>
<keyword id="KW-0689">Ribosomal protein</keyword>
<gene>
    <name evidence="1" type="primary">rpmF</name>
    <name type="ordered locus">Erum5740</name>
    <name type="ordered locus">ERWE_CDS_06030</name>
</gene>
<accession>Q5HAV7</accession>
<accession>Q5FD50</accession>
<dbReference type="EMBL" id="CR767821">
    <property type="protein sequence ID" value="CAH58304.1"/>
    <property type="molecule type" value="Genomic_DNA"/>
</dbReference>
<dbReference type="EMBL" id="CR925678">
    <property type="protein sequence ID" value="CAI27097.1"/>
    <property type="molecule type" value="Genomic_DNA"/>
</dbReference>
<dbReference type="RefSeq" id="WP_011155254.1">
    <property type="nucleotide sequence ID" value="NC_005295.2"/>
</dbReference>
<dbReference type="SMR" id="Q5HAV7"/>
<dbReference type="GeneID" id="33057738"/>
<dbReference type="KEGG" id="eru:Erum5740"/>
<dbReference type="KEGG" id="erw:ERWE_CDS_06030"/>
<dbReference type="eggNOG" id="COG0333">
    <property type="taxonomic scope" value="Bacteria"/>
</dbReference>
<dbReference type="HOGENOM" id="CLU_129084_2_0_5"/>
<dbReference type="Proteomes" id="UP000001021">
    <property type="component" value="Chromosome"/>
</dbReference>
<dbReference type="GO" id="GO:0015934">
    <property type="term" value="C:large ribosomal subunit"/>
    <property type="evidence" value="ECO:0007669"/>
    <property type="project" value="InterPro"/>
</dbReference>
<dbReference type="GO" id="GO:0003735">
    <property type="term" value="F:structural constituent of ribosome"/>
    <property type="evidence" value="ECO:0007669"/>
    <property type="project" value="InterPro"/>
</dbReference>
<dbReference type="GO" id="GO:0006412">
    <property type="term" value="P:translation"/>
    <property type="evidence" value="ECO:0007669"/>
    <property type="project" value="UniProtKB-UniRule"/>
</dbReference>
<dbReference type="Gene3D" id="1.20.5.640">
    <property type="entry name" value="Single helix bin"/>
    <property type="match status" value="1"/>
</dbReference>
<dbReference type="HAMAP" id="MF_00340">
    <property type="entry name" value="Ribosomal_bL32"/>
    <property type="match status" value="1"/>
</dbReference>
<dbReference type="InterPro" id="IPR002677">
    <property type="entry name" value="Ribosomal_bL32"/>
</dbReference>
<dbReference type="InterPro" id="IPR044957">
    <property type="entry name" value="Ribosomal_bL32_bact"/>
</dbReference>
<dbReference type="InterPro" id="IPR011332">
    <property type="entry name" value="Ribosomal_zn-bd"/>
</dbReference>
<dbReference type="NCBIfam" id="TIGR01031">
    <property type="entry name" value="rpmF_bact"/>
    <property type="match status" value="1"/>
</dbReference>
<dbReference type="PANTHER" id="PTHR35534">
    <property type="entry name" value="50S RIBOSOMAL PROTEIN L32"/>
    <property type="match status" value="1"/>
</dbReference>
<dbReference type="PANTHER" id="PTHR35534:SF1">
    <property type="entry name" value="LARGE RIBOSOMAL SUBUNIT PROTEIN BL32"/>
    <property type="match status" value="1"/>
</dbReference>
<dbReference type="Pfam" id="PF01783">
    <property type="entry name" value="Ribosomal_L32p"/>
    <property type="match status" value="1"/>
</dbReference>
<dbReference type="SUPFAM" id="SSF57829">
    <property type="entry name" value="Zn-binding ribosomal proteins"/>
    <property type="match status" value="1"/>
</dbReference>
<evidence type="ECO:0000255" key="1">
    <source>
        <dbReference type="HAMAP-Rule" id="MF_00340"/>
    </source>
</evidence>
<evidence type="ECO:0000305" key="2"/>
<proteinExistence type="inferred from homology"/>
<comment type="similarity">
    <text evidence="1">Belongs to the bacterial ribosomal protein bL32 family.</text>
</comment>
<feature type="chain" id="PRO_0000225723" description="Large ribosomal subunit protein bL32">
    <location>
        <begin position="1"/>
        <end position="60"/>
    </location>
</feature>
<name>RL32_EHRRW</name>
<sequence length="60" mass="6866">MAVPKRKKSKSRRNMHRSHCKLKVPNIGIDKTTGEYKLSHHICLGGYYNGKQIVEVDSNI</sequence>
<protein>
    <recommendedName>
        <fullName evidence="1">Large ribosomal subunit protein bL32</fullName>
    </recommendedName>
    <alternativeName>
        <fullName evidence="2">50S ribosomal protein L32</fullName>
    </alternativeName>
</protein>
<reference key="1">
    <citation type="journal article" date="2005" name="Proc. Natl. Acad. Sci. U.S.A.">
        <title>The genome of the heartwater agent Ehrlichia ruminantium contains multiple tandem repeats of actively variable copy number.</title>
        <authorList>
            <person name="Collins N.E."/>
            <person name="Liebenberg J."/>
            <person name="de Villiers E.P."/>
            <person name="Brayton K.A."/>
            <person name="Louw E."/>
            <person name="Pretorius A."/>
            <person name="Faber F.E."/>
            <person name="van Heerden H."/>
            <person name="Josemans A."/>
            <person name="van Kleef M."/>
            <person name="Steyn H.C."/>
            <person name="van Strijp M.F."/>
            <person name="Zweygarth E."/>
            <person name="Jongejan F."/>
            <person name="Maillard J.C."/>
            <person name="Berthier D."/>
            <person name="Botha M."/>
            <person name="Joubert F."/>
            <person name="Corton C.H."/>
            <person name="Thomson N.R."/>
            <person name="Allsopp M.T."/>
            <person name="Allsopp B.A."/>
        </authorList>
    </citation>
    <scope>NUCLEOTIDE SEQUENCE [LARGE SCALE GENOMIC DNA]</scope>
    <source>
        <strain>Welgevonden</strain>
    </source>
</reference>
<reference key="2">
    <citation type="journal article" date="2006" name="J. Bacteriol.">
        <title>Comparative genomic analysis of three strains of Ehrlichia ruminantium reveals an active process of genome size plasticity.</title>
        <authorList>
            <person name="Frutos R."/>
            <person name="Viari A."/>
            <person name="Ferraz C."/>
            <person name="Morgat A."/>
            <person name="Eychenie S."/>
            <person name="Kandassamy Y."/>
            <person name="Chantal I."/>
            <person name="Bensaid A."/>
            <person name="Coissac E."/>
            <person name="Vachiery N."/>
            <person name="Demaille J."/>
            <person name="Martinez D."/>
        </authorList>
    </citation>
    <scope>NUCLEOTIDE SEQUENCE [LARGE SCALE GENOMIC DNA]</scope>
    <source>
        <strain>Welgevonden</strain>
    </source>
</reference>